<organism>
    <name type="scientific">Saccharomyces cerevisiae (strain ATCC 204508 / S288c)</name>
    <name type="common">Baker's yeast</name>
    <dbReference type="NCBI Taxonomy" id="559292"/>
    <lineage>
        <taxon>Eukaryota</taxon>
        <taxon>Fungi</taxon>
        <taxon>Dikarya</taxon>
        <taxon>Ascomycota</taxon>
        <taxon>Saccharomycotina</taxon>
        <taxon>Saccharomycetes</taxon>
        <taxon>Saccharomycetales</taxon>
        <taxon>Saccharomycetaceae</taxon>
        <taxon>Saccharomyces</taxon>
    </lineage>
</organism>
<proteinExistence type="evidence at protein level"/>
<reference key="1">
    <citation type="journal article" date="1994" name="Science">
        <title>Complete nucleotide sequence of Saccharomyces cerevisiae chromosome VIII.</title>
        <authorList>
            <person name="Johnston M."/>
            <person name="Andrews S."/>
            <person name="Brinkman R."/>
            <person name="Cooper J."/>
            <person name="Ding H."/>
            <person name="Dover J."/>
            <person name="Du Z."/>
            <person name="Favello A."/>
            <person name="Fulton L."/>
            <person name="Gattung S."/>
            <person name="Geisel C."/>
            <person name="Kirsten J."/>
            <person name="Kucaba T."/>
            <person name="Hillier L.W."/>
            <person name="Jier M."/>
            <person name="Johnston L."/>
            <person name="Langston Y."/>
            <person name="Latreille P."/>
            <person name="Louis E.J."/>
            <person name="Macri C."/>
            <person name="Mardis E."/>
            <person name="Menezes S."/>
            <person name="Mouser L."/>
            <person name="Nhan M."/>
            <person name="Rifkin L."/>
            <person name="Riles L."/>
            <person name="St Peter H."/>
            <person name="Trevaskis E."/>
            <person name="Vaughan K."/>
            <person name="Vignati D."/>
            <person name="Wilcox L."/>
            <person name="Wohldman P."/>
            <person name="Waterston R."/>
            <person name="Wilson R."/>
            <person name="Vaudin M."/>
        </authorList>
    </citation>
    <scope>NUCLEOTIDE SEQUENCE [LARGE SCALE GENOMIC DNA]</scope>
    <source>
        <strain>ATCC 204508 / S288c</strain>
    </source>
</reference>
<reference key="2">
    <citation type="journal article" date="2014" name="G3 (Bethesda)">
        <title>The reference genome sequence of Saccharomyces cerevisiae: Then and now.</title>
        <authorList>
            <person name="Engel S.R."/>
            <person name="Dietrich F.S."/>
            <person name="Fisk D.G."/>
            <person name="Binkley G."/>
            <person name="Balakrishnan R."/>
            <person name="Costanzo M.C."/>
            <person name="Dwight S.S."/>
            <person name="Hitz B.C."/>
            <person name="Karra K."/>
            <person name="Nash R.S."/>
            <person name="Weng S."/>
            <person name="Wong E.D."/>
            <person name="Lloyd P."/>
            <person name="Skrzypek M.S."/>
            <person name="Miyasato S.R."/>
            <person name="Simison M."/>
            <person name="Cherry J.M."/>
        </authorList>
    </citation>
    <scope>GENOME REANNOTATION</scope>
    <source>
        <strain>ATCC 204508 / S288c</strain>
    </source>
</reference>
<reference key="3">
    <citation type="journal article" date="2002" name="Genome Res.">
        <title>Parallel identification of new genes in Saccharomyces cerevisiae.</title>
        <authorList>
            <person name="Oshiro G."/>
            <person name="Wodicka L.M."/>
            <person name="Washburn M.P."/>
            <person name="Yates J.R. III"/>
            <person name="Lockhart D.J."/>
            <person name="Winzeler E.A."/>
        </authorList>
    </citation>
    <scope>IDENTIFICATION BY MASS SPECTROMETRY</scope>
</reference>
<feature type="chain" id="PRO_0000245392" description="Uncharacterized protein YHL015W-A">
    <location>
        <begin position="1"/>
        <end position="27"/>
    </location>
</feature>
<gene>
    <name type="ordered locus">YHL015W-A</name>
</gene>
<dbReference type="EMBL" id="U11582">
    <property type="status" value="NOT_ANNOTATED_CDS"/>
    <property type="molecule type" value="Genomic_DNA"/>
</dbReference>
<dbReference type="EMBL" id="BK006934">
    <property type="protein sequence ID" value="DAA06670.1"/>
    <property type="molecule type" value="Genomic_DNA"/>
</dbReference>
<dbReference type="RefSeq" id="NP_878085.1">
    <property type="nucleotide sequence ID" value="NM_001184649.1"/>
</dbReference>
<dbReference type="BioGRID" id="37067">
    <property type="interactions" value="49"/>
</dbReference>
<dbReference type="FunCoup" id="Q3E7Z6">
    <property type="interactions" value="14"/>
</dbReference>
<dbReference type="STRING" id="4932.YHL015W-A"/>
<dbReference type="PaxDb" id="4932-YHL015W-A"/>
<dbReference type="EnsemblFungi" id="YHL015W-A_mRNA">
    <property type="protein sequence ID" value="YHL015W-A"/>
    <property type="gene ID" value="YHL015W-A"/>
</dbReference>
<dbReference type="GeneID" id="1466525"/>
<dbReference type="KEGG" id="sce:YHL015W-A"/>
<dbReference type="AGR" id="SGD:S000028828"/>
<dbReference type="SGD" id="S000028828">
    <property type="gene designation" value="YHL015W-A"/>
</dbReference>
<dbReference type="VEuPathDB" id="FungiDB:YHL015W-A"/>
<dbReference type="HOGENOM" id="CLU_221666_0_0_1"/>
<dbReference type="InParanoid" id="Q3E7Z6"/>
<dbReference type="BioCyc" id="YEAST:G3O-31275-MONOMER"/>
<dbReference type="PRO" id="PR:Q3E7Z6"/>
<dbReference type="Proteomes" id="UP000002311">
    <property type="component" value="Chromosome VIII"/>
</dbReference>
<keyword id="KW-1185">Reference proteome</keyword>
<protein>
    <recommendedName>
        <fullName>Uncharacterized protein YHL015W-A</fullName>
    </recommendedName>
</protein>
<name>YH015_YEAST</name>
<sequence length="27" mass="3200">MTAFASLREPLVLANLKIKVHIYRMKR</sequence>
<accession>Q3E7Z6</accession>
<accession>D3DKP6</accession>